<accession>Q5HRE0</accession>
<protein>
    <recommendedName>
        <fullName evidence="1">Pyridinium-3,5-bisthiocarboxylic acid mononucleotide nickel insertion protein</fullName>
        <shortName evidence="1">P2TMN nickel insertion protein</shortName>
        <ecNumber evidence="1">4.99.1.12</ecNumber>
    </recommendedName>
    <alternativeName>
        <fullName evidence="1">Nickel-pincer cofactor biosynthesis protein LarC</fullName>
    </alternativeName>
</protein>
<reference key="1">
    <citation type="journal article" date="2005" name="J. Bacteriol.">
        <title>Insights on evolution of virulence and resistance from the complete genome analysis of an early methicillin-resistant Staphylococcus aureus strain and a biofilm-producing methicillin-resistant Staphylococcus epidermidis strain.</title>
        <authorList>
            <person name="Gill S.R."/>
            <person name="Fouts D.E."/>
            <person name="Archer G.L."/>
            <person name="Mongodin E.F."/>
            <person name="DeBoy R.T."/>
            <person name="Ravel J."/>
            <person name="Paulsen I.T."/>
            <person name="Kolonay J.F."/>
            <person name="Brinkac L.M."/>
            <person name="Beanan M.J."/>
            <person name="Dodson R.J."/>
            <person name="Daugherty S.C."/>
            <person name="Madupu R."/>
            <person name="Angiuoli S.V."/>
            <person name="Durkin A.S."/>
            <person name="Haft D.H."/>
            <person name="Vamathevan J.J."/>
            <person name="Khouri H."/>
            <person name="Utterback T.R."/>
            <person name="Lee C."/>
            <person name="Dimitrov G."/>
            <person name="Jiang L."/>
            <person name="Qin H."/>
            <person name="Weidman J."/>
            <person name="Tran K."/>
            <person name="Kang K.H."/>
            <person name="Hance I.R."/>
            <person name="Nelson K.E."/>
            <person name="Fraser C.M."/>
        </authorList>
    </citation>
    <scope>NUCLEOTIDE SEQUENCE [LARGE SCALE GENOMIC DNA]</scope>
    <source>
        <strain>ATCC 35984 / DSM 28319 / BCRC 17069 / CCUG 31568 / BM 3577 / RP62A</strain>
    </source>
</reference>
<dbReference type="EC" id="4.99.1.12" evidence="1"/>
<dbReference type="EMBL" id="CP000029">
    <property type="protein sequence ID" value="AAW53655.1"/>
    <property type="molecule type" value="Genomic_DNA"/>
</dbReference>
<dbReference type="RefSeq" id="WP_001832070.1">
    <property type="nucleotide sequence ID" value="NC_002976.3"/>
</dbReference>
<dbReference type="SMR" id="Q5HRE0"/>
<dbReference type="STRING" id="176279.SERP0253"/>
<dbReference type="KEGG" id="ser:SERP0253"/>
<dbReference type="eggNOG" id="COG1641">
    <property type="taxonomic scope" value="Bacteria"/>
</dbReference>
<dbReference type="HOGENOM" id="CLU_028523_2_1_9"/>
<dbReference type="Proteomes" id="UP000000531">
    <property type="component" value="Chromosome"/>
</dbReference>
<dbReference type="GO" id="GO:0016829">
    <property type="term" value="F:lyase activity"/>
    <property type="evidence" value="ECO:0007669"/>
    <property type="project" value="UniProtKB-UniRule"/>
</dbReference>
<dbReference type="GO" id="GO:0016151">
    <property type="term" value="F:nickel cation binding"/>
    <property type="evidence" value="ECO:0007669"/>
    <property type="project" value="UniProtKB-UniRule"/>
</dbReference>
<dbReference type="GO" id="GO:0051604">
    <property type="term" value="P:protein maturation"/>
    <property type="evidence" value="ECO:0007669"/>
    <property type="project" value="UniProtKB-UniRule"/>
</dbReference>
<dbReference type="Gene3D" id="3.10.20.300">
    <property type="entry name" value="mk0293 like domain"/>
    <property type="match status" value="1"/>
</dbReference>
<dbReference type="Gene3D" id="3.30.70.1380">
    <property type="entry name" value="Transcriptional regulatory protein pf0864 domain like"/>
    <property type="match status" value="1"/>
</dbReference>
<dbReference type="HAMAP" id="MF_01074">
    <property type="entry name" value="LarC"/>
    <property type="match status" value="1"/>
</dbReference>
<dbReference type="InterPro" id="IPR002822">
    <property type="entry name" value="Ni_insertion"/>
</dbReference>
<dbReference type="NCBIfam" id="TIGR00299">
    <property type="entry name" value="nickel pincer cofactor biosynthesis protein LarC"/>
    <property type="match status" value="1"/>
</dbReference>
<dbReference type="PANTHER" id="PTHR36566">
    <property type="entry name" value="NICKEL INSERTION PROTEIN-RELATED"/>
    <property type="match status" value="1"/>
</dbReference>
<dbReference type="PANTHER" id="PTHR36566:SF1">
    <property type="entry name" value="PYRIDINIUM-3,5-BISTHIOCARBOXYLIC ACID MONONUCLEOTIDE NICKEL INSERTION PROTEIN"/>
    <property type="match status" value="1"/>
</dbReference>
<dbReference type="Pfam" id="PF01969">
    <property type="entry name" value="Ni_insertion"/>
    <property type="match status" value="1"/>
</dbReference>
<keyword id="KW-0456">Lyase</keyword>
<keyword id="KW-0533">Nickel</keyword>
<keyword id="KW-1185">Reference proteome</keyword>
<proteinExistence type="inferred from homology"/>
<gene>
    <name evidence="1" type="primary">larC</name>
    <name type="ordered locus">SERP0253</name>
</gene>
<organism>
    <name type="scientific">Staphylococcus epidermidis (strain ATCC 35984 / DSM 28319 / BCRC 17069 / CCUG 31568 / BM 3577 / RP62A)</name>
    <dbReference type="NCBI Taxonomy" id="176279"/>
    <lineage>
        <taxon>Bacteria</taxon>
        <taxon>Bacillati</taxon>
        <taxon>Bacillota</taxon>
        <taxon>Bacilli</taxon>
        <taxon>Bacillales</taxon>
        <taxon>Staphylococcaceae</taxon>
        <taxon>Staphylococcus</taxon>
    </lineage>
</organism>
<comment type="function">
    <text evidence="1">Involved in the biosynthesis of a nickel-pincer cofactor ((SCS)Ni(II) pincer complex). Binds Ni(2+), and functions in nickel delivery to pyridinium-3,5-bisthiocarboxylic acid mononucleotide (P2TMN), to form the mature cofactor. Is thus probably required for the activation of nickel-pincer cofactor-dependent enzymes.</text>
</comment>
<comment type="catalytic activity">
    <reaction evidence="1">
        <text>Ni(II)-pyridinium-3,5-bisthiocarboxylate mononucleotide = pyridinium-3,5-bisthiocarboxylate mononucleotide + Ni(2+)</text>
        <dbReference type="Rhea" id="RHEA:54784"/>
        <dbReference type="ChEBI" id="CHEBI:49786"/>
        <dbReference type="ChEBI" id="CHEBI:137372"/>
        <dbReference type="ChEBI" id="CHEBI:137373"/>
        <dbReference type="EC" id="4.99.1.12"/>
    </reaction>
</comment>
<comment type="similarity">
    <text evidence="1">Belongs to the LarC family.</text>
</comment>
<sequence>MTKALYLDCHAGIAGDMLLSALVDLGAHPEDIESELKKLPLDQFKLHFQKRVKQGIHAMTLNIDVKESNHHRHVNDIFKMIDDSTLPERVKYRSKKIFEIIGQAEAKIHGMSFEEVHFHEVGAMDSIIDIIGGCIALEQLGINTLYCSAIPTGHGKIHIAHGIYPIPAPATAEILKGIPIAHFDVQSELTTPTGAAFAKGLVSSFGPFPSATIQHIGYGAGSKDFNFPNILRVIQFDSEFEQQDSVQVIECQIDDMTPEALGDFMNNALEQGALDAYYTPIFMKKSRPSTQLTLICKLHDKIYFEQLILQETSSLGVRSTSVNRKILNRAFKILSTQHGTVSIKFGLQNGKIMKMKPEYEDLKKMAKTTNQPFQVIHNEVLQQLYQTYRIGDILQ</sequence>
<feature type="chain" id="PRO_0000146852" description="Pyridinium-3,5-bisthiocarboxylic acid mononucleotide nickel insertion protein">
    <location>
        <begin position="1"/>
        <end position="395"/>
    </location>
</feature>
<evidence type="ECO:0000255" key="1">
    <source>
        <dbReference type="HAMAP-Rule" id="MF_01074"/>
    </source>
</evidence>
<name>LARC_STAEQ</name>